<comment type="function">
    <text evidence="2">Component of the ubiquinol-cytochrome c reductase complex (complex III or cytochrome b-c1 complex) that is part of the mitochondrial respiratory chain. The b-c1 complex mediates electron transfer from ubiquinol to cytochrome c. Contributes to the generation of a proton gradient across the mitochondrial membrane that is then used for ATP synthesis.</text>
</comment>
<comment type="cofactor">
    <cofactor evidence="2">
        <name>heme b</name>
        <dbReference type="ChEBI" id="CHEBI:60344"/>
    </cofactor>
    <text evidence="2">Binds 2 heme b groups non-covalently.</text>
</comment>
<comment type="subunit">
    <text evidence="2">The cytochrome bc1 complex contains 11 subunits: 3 respiratory subunits (MT-CYB, CYC1 and UQCRFS1), 2 core proteins (UQCRC1 and UQCRC2) and 6 low-molecular weight proteins (UQCRH/QCR6, UQCRB/QCR7, UQCRQ/QCR8, UQCR10/QCR9, UQCR11/QCR10 and a cleavage product of UQCRFS1). This cytochrome bc1 complex then forms a dimer.</text>
</comment>
<comment type="subcellular location">
    <subcellularLocation>
        <location evidence="2">Mitochondrion inner membrane</location>
        <topology evidence="2">Multi-pass membrane protein</topology>
    </subcellularLocation>
</comment>
<comment type="miscellaneous">
    <text evidence="1">Heme 1 (or BL or b562) is low-potential and absorbs at about 562 nm, and heme 2 (or BH or b566) is high-potential and absorbs at about 566 nm.</text>
</comment>
<comment type="similarity">
    <text evidence="3 4">Belongs to the cytochrome b family.</text>
</comment>
<comment type="caution">
    <text evidence="2">The full-length protein contains only eight transmembrane helices, not nine as predicted by bioinformatics tools.</text>
</comment>
<accession>Q9G6G2</accession>
<evidence type="ECO:0000250" key="1"/>
<evidence type="ECO:0000250" key="2">
    <source>
        <dbReference type="UniProtKB" id="P00157"/>
    </source>
</evidence>
<evidence type="ECO:0000255" key="3">
    <source>
        <dbReference type="PROSITE-ProRule" id="PRU00967"/>
    </source>
</evidence>
<evidence type="ECO:0000255" key="4">
    <source>
        <dbReference type="PROSITE-ProRule" id="PRU00968"/>
    </source>
</evidence>
<proteinExistence type="inferred from homology"/>
<name>CYB_OCHHY</name>
<dbReference type="EMBL" id="AB053257">
    <property type="protein sequence ID" value="BAB20633.1"/>
    <property type="molecule type" value="Genomic_DNA"/>
</dbReference>
<dbReference type="SMR" id="Q9G6G2"/>
<dbReference type="GO" id="GO:0005743">
    <property type="term" value="C:mitochondrial inner membrane"/>
    <property type="evidence" value="ECO:0007669"/>
    <property type="project" value="UniProtKB-SubCell"/>
</dbReference>
<dbReference type="GO" id="GO:0045275">
    <property type="term" value="C:respiratory chain complex III"/>
    <property type="evidence" value="ECO:0007669"/>
    <property type="project" value="InterPro"/>
</dbReference>
<dbReference type="GO" id="GO:0046872">
    <property type="term" value="F:metal ion binding"/>
    <property type="evidence" value="ECO:0007669"/>
    <property type="project" value="UniProtKB-KW"/>
</dbReference>
<dbReference type="GO" id="GO:0008121">
    <property type="term" value="F:ubiquinol-cytochrome-c reductase activity"/>
    <property type="evidence" value="ECO:0007669"/>
    <property type="project" value="InterPro"/>
</dbReference>
<dbReference type="GO" id="GO:0006122">
    <property type="term" value="P:mitochondrial electron transport, ubiquinol to cytochrome c"/>
    <property type="evidence" value="ECO:0007669"/>
    <property type="project" value="TreeGrafter"/>
</dbReference>
<dbReference type="CDD" id="cd00290">
    <property type="entry name" value="cytochrome_b_C"/>
    <property type="match status" value="1"/>
</dbReference>
<dbReference type="CDD" id="cd00284">
    <property type="entry name" value="Cytochrome_b_N"/>
    <property type="match status" value="1"/>
</dbReference>
<dbReference type="FunFam" id="1.20.810.10:FF:000002">
    <property type="entry name" value="Cytochrome b"/>
    <property type="match status" value="1"/>
</dbReference>
<dbReference type="Gene3D" id="1.20.810.10">
    <property type="entry name" value="Cytochrome Bc1 Complex, Chain C"/>
    <property type="match status" value="1"/>
</dbReference>
<dbReference type="InterPro" id="IPR005798">
    <property type="entry name" value="Cyt_b/b6_C"/>
</dbReference>
<dbReference type="InterPro" id="IPR036150">
    <property type="entry name" value="Cyt_b/b6_C_sf"/>
</dbReference>
<dbReference type="InterPro" id="IPR005797">
    <property type="entry name" value="Cyt_b/b6_N"/>
</dbReference>
<dbReference type="InterPro" id="IPR027387">
    <property type="entry name" value="Cytb/b6-like_sf"/>
</dbReference>
<dbReference type="InterPro" id="IPR030689">
    <property type="entry name" value="Cytochrome_b"/>
</dbReference>
<dbReference type="InterPro" id="IPR048260">
    <property type="entry name" value="Cytochrome_b_C_euk/bac"/>
</dbReference>
<dbReference type="InterPro" id="IPR048259">
    <property type="entry name" value="Cytochrome_b_N_euk/bac"/>
</dbReference>
<dbReference type="InterPro" id="IPR016174">
    <property type="entry name" value="Di-haem_cyt_TM"/>
</dbReference>
<dbReference type="PANTHER" id="PTHR19271">
    <property type="entry name" value="CYTOCHROME B"/>
    <property type="match status" value="1"/>
</dbReference>
<dbReference type="PANTHER" id="PTHR19271:SF16">
    <property type="entry name" value="CYTOCHROME B"/>
    <property type="match status" value="1"/>
</dbReference>
<dbReference type="Pfam" id="PF00032">
    <property type="entry name" value="Cytochrom_B_C"/>
    <property type="match status" value="1"/>
</dbReference>
<dbReference type="Pfam" id="PF00033">
    <property type="entry name" value="Cytochrome_B"/>
    <property type="match status" value="1"/>
</dbReference>
<dbReference type="PIRSF" id="PIRSF038885">
    <property type="entry name" value="COB"/>
    <property type="match status" value="1"/>
</dbReference>
<dbReference type="SUPFAM" id="SSF81648">
    <property type="entry name" value="a domain/subunit of cytochrome bc1 complex (Ubiquinol-cytochrome c reductase)"/>
    <property type="match status" value="1"/>
</dbReference>
<dbReference type="SUPFAM" id="SSF81342">
    <property type="entry name" value="Transmembrane di-heme cytochromes"/>
    <property type="match status" value="1"/>
</dbReference>
<dbReference type="PROSITE" id="PS51003">
    <property type="entry name" value="CYTB_CTER"/>
    <property type="match status" value="1"/>
</dbReference>
<dbReference type="PROSITE" id="PS51002">
    <property type="entry name" value="CYTB_NTER"/>
    <property type="match status" value="1"/>
</dbReference>
<feature type="chain" id="PRO_0000061302" description="Cytochrome b">
    <location>
        <begin position="1"/>
        <end position="379"/>
    </location>
</feature>
<feature type="transmembrane region" description="Helical" evidence="2">
    <location>
        <begin position="33"/>
        <end position="53"/>
    </location>
</feature>
<feature type="transmembrane region" description="Helical" evidence="2">
    <location>
        <begin position="77"/>
        <end position="98"/>
    </location>
</feature>
<feature type="transmembrane region" description="Helical" evidence="2">
    <location>
        <begin position="113"/>
        <end position="133"/>
    </location>
</feature>
<feature type="transmembrane region" description="Helical" evidence="2">
    <location>
        <begin position="178"/>
        <end position="198"/>
    </location>
</feature>
<feature type="transmembrane region" description="Helical" evidence="2">
    <location>
        <begin position="226"/>
        <end position="246"/>
    </location>
</feature>
<feature type="transmembrane region" description="Helical" evidence="2">
    <location>
        <begin position="288"/>
        <end position="308"/>
    </location>
</feature>
<feature type="transmembrane region" description="Helical" evidence="2">
    <location>
        <begin position="320"/>
        <end position="340"/>
    </location>
</feature>
<feature type="transmembrane region" description="Helical" evidence="2">
    <location>
        <begin position="347"/>
        <end position="367"/>
    </location>
</feature>
<feature type="binding site" description="axial binding residue" evidence="2">
    <location>
        <position position="83"/>
    </location>
    <ligand>
        <name>heme b</name>
        <dbReference type="ChEBI" id="CHEBI:60344"/>
        <label>b562</label>
    </ligand>
    <ligandPart>
        <name>Fe</name>
        <dbReference type="ChEBI" id="CHEBI:18248"/>
    </ligandPart>
</feature>
<feature type="binding site" description="axial binding residue" evidence="2">
    <location>
        <position position="97"/>
    </location>
    <ligand>
        <name>heme b</name>
        <dbReference type="ChEBI" id="CHEBI:60344"/>
        <label>b566</label>
    </ligand>
    <ligandPart>
        <name>Fe</name>
        <dbReference type="ChEBI" id="CHEBI:18248"/>
    </ligandPart>
</feature>
<feature type="binding site" description="axial binding residue" evidence="2">
    <location>
        <position position="182"/>
    </location>
    <ligand>
        <name>heme b</name>
        <dbReference type="ChEBI" id="CHEBI:60344"/>
        <label>b562</label>
    </ligand>
    <ligandPart>
        <name>Fe</name>
        <dbReference type="ChEBI" id="CHEBI:18248"/>
    </ligandPart>
</feature>
<feature type="binding site" description="axial binding residue" evidence="2">
    <location>
        <position position="196"/>
    </location>
    <ligand>
        <name>heme b</name>
        <dbReference type="ChEBI" id="CHEBI:60344"/>
        <label>b566</label>
    </ligand>
    <ligandPart>
        <name>Fe</name>
        <dbReference type="ChEBI" id="CHEBI:18248"/>
    </ligandPart>
</feature>
<feature type="binding site" evidence="2">
    <location>
        <position position="201"/>
    </location>
    <ligand>
        <name>a ubiquinone</name>
        <dbReference type="ChEBI" id="CHEBI:16389"/>
    </ligand>
</feature>
<keyword id="KW-0249">Electron transport</keyword>
<keyword id="KW-0349">Heme</keyword>
<keyword id="KW-0408">Iron</keyword>
<keyword id="KW-0472">Membrane</keyword>
<keyword id="KW-0479">Metal-binding</keyword>
<keyword id="KW-0496">Mitochondrion</keyword>
<keyword id="KW-0999">Mitochondrion inner membrane</keyword>
<keyword id="KW-0679">Respiratory chain</keyword>
<keyword id="KW-0812">Transmembrane</keyword>
<keyword id="KW-1133">Transmembrane helix</keyword>
<keyword id="KW-0813">Transport</keyword>
<keyword id="KW-0830">Ubiquinone</keyword>
<reference key="1">
    <citation type="submission" date="2001-01" db="EMBL/GenBank/DDBJ databases">
        <title>Genetic analyses of Ochotona hyperborea.</title>
        <authorList>
            <person name="Takaki M."/>
            <person name="Suzuki H."/>
            <person name="Yamada F."/>
        </authorList>
    </citation>
    <scope>NUCLEOTIDE SEQUENCE [GENOMIC DNA]</scope>
    <source>
        <strain>Isolate JP01</strain>
    </source>
</reference>
<protein>
    <recommendedName>
        <fullName>Cytochrome b</fullName>
    </recommendedName>
    <alternativeName>
        <fullName>Complex III subunit 3</fullName>
    </alternativeName>
    <alternativeName>
        <fullName>Complex III subunit III</fullName>
    </alternativeName>
    <alternativeName>
        <fullName>Cytochrome b-c1 complex subunit 3</fullName>
    </alternativeName>
    <alternativeName>
        <fullName>Ubiquinol-cytochrome-c reductase complex cytochrome b subunit</fullName>
    </alternativeName>
</protein>
<gene>
    <name type="primary">MT-CYB</name>
    <name type="synonym">COB</name>
    <name type="synonym">CYTB</name>
    <name type="synonym">MTCYB</name>
</gene>
<sequence>MTNIRKNHPLMKIVNHSLIDLPTPSNISTWWNFGSLLGLCLVIQIITGLFLAMHYTSDTLTAFSSVTHICRDVNYGWIIRYLHANGASMFFICLFLHVGRGIYYGSYTYSETWNIGILLLFAVMATAFMGYVLPWGQMSFWGATVITNLLSAIPYIGTDLVQWIWGGFSVDKATLTRFFAFHFILPFIIAALVMVHLLFLHETGSNNPTGIISDADKIPFHPYYTVKDALGFLVLTTLLLTLVLFSPDLLGDPDNYTPANPLNTPPHIKPEWYFLFAYAILRSIPNKLGGVLALVLSIAILAIMPLLHTSKQRSMMFRPISQTLFWILVADLLTLTWIGGQPVEHPFIIIGQLASFLYFFLILILMPTCSLIENKLLKW</sequence>
<organism>
    <name type="scientific">Ochotona hyperborea</name>
    <name type="common">Northern pika</name>
    <dbReference type="NCBI Taxonomy" id="130834"/>
    <lineage>
        <taxon>Eukaryota</taxon>
        <taxon>Metazoa</taxon>
        <taxon>Chordata</taxon>
        <taxon>Craniata</taxon>
        <taxon>Vertebrata</taxon>
        <taxon>Euteleostomi</taxon>
        <taxon>Mammalia</taxon>
        <taxon>Eutheria</taxon>
        <taxon>Euarchontoglires</taxon>
        <taxon>Glires</taxon>
        <taxon>Lagomorpha</taxon>
        <taxon>Ochotonidae</taxon>
        <taxon>Ochotona</taxon>
    </lineage>
</organism>
<geneLocation type="mitochondrion"/>